<organism>
    <name type="scientific">Homo sapiens</name>
    <name type="common">Human</name>
    <dbReference type="NCBI Taxonomy" id="9606"/>
    <lineage>
        <taxon>Eukaryota</taxon>
        <taxon>Metazoa</taxon>
        <taxon>Chordata</taxon>
        <taxon>Craniata</taxon>
        <taxon>Vertebrata</taxon>
        <taxon>Euteleostomi</taxon>
        <taxon>Mammalia</taxon>
        <taxon>Eutheria</taxon>
        <taxon>Euarchontoglires</taxon>
        <taxon>Primates</taxon>
        <taxon>Haplorrhini</taxon>
        <taxon>Catarrhini</taxon>
        <taxon>Hominidae</taxon>
        <taxon>Homo</taxon>
    </lineage>
</organism>
<feature type="chain" id="PRO_0000263685" description="Putative uncharacterized protein encoded by HEXA-AS1">
    <location>
        <begin position="1"/>
        <end position="139"/>
    </location>
</feature>
<name>HEAS1_HUMAN</name>
<gene>
    <name type="primary">HEXA-AS1</name>
    <name type="synonym">C15orf34</name>
</gene>
<protein>
    <recommendedName>
        <fullName>Putative uncharacterized protein encoded by HEXA-AS1</fullName>
    </recommendedName>
    <alternativeName>
        <fullName>HEXA antisense RNA 1</fullName>
    </alternativeName>
    <alternativeName>
        <fullName>HEXA antisense gene protein 1</fullName>
    </alternativeName>
</protein>
<comment type="caution">
    <text evidence="1">Product of a dubious gene prediction.</text>
</comment>
<proteinExistence type="uncertain"/>
<sequence>MTGKNVYFQSQLEAFHCLQYELFPSRLTINLLVTTHIPFPQTKPHIARCVFTESSKILLGLWVQDGECSEIMTGAWSCRALRRKSRNLFSEQLKIIPKDLHFRNTMLSSCIRNQLGGPFLLEVENNERLNYRSGEGRQL</sequence>
<evidence type="ECO:0000305" key="1"/>
<accession>Q9H8Q6</accession>
<reference key="1">
    <citation type="journal article" date="2004" name="Nat. Genet.">
        <title>Complete sequencing and characterization of 21,243 full-length human cDNAs.</title>
        <authorList>
            <person name="Ota T."/>
            <person name="Suzuki Y."/>
            <person name="Nishikawa T."/>
            <person name="Otsuki T."/>
            <person name="Sugiyama T."/>
            <person name="Irie R."/>
            <person name="Wakamatsu A."/>
            <person name="Hayashi K."/>
            <person name="Sato H."/>
            <person name="Nagai K."/>
            <person name="Kimura K."/>
            <person name="Makita H."/>
            <person name="Sekine M."/>
            <person name="Obayashi M."/>
            <person name="Nishi T."/>
            <person name="Shibahara T."/>
            <person name="Tanaka T."/>
            <person name="Ishii S."/>
            <person name="Yamamoto J."/>
            <person name="Saito K."/>
            <person name="Kawai Y."/>
            <person name="Isono Y."/>
            <person name="Nakamura Y."/>
            <person name="Nagahari K."/>
            <person name="Murakami K."/>
            <person name="Yasuda T."/>
            <person name="Iwayanagi T."/>
            <person name="Wagatsuma M."/>
            <person name="Shiratori A."/>
            <person name="Sudo H."/>
            <person name="Hosoiri T."/>
            <person name="Kaku Y."/>
            <person name="Kodaira H."/>
            <person name="Kondo H."/>
            <person name="Sugawara M."/>
            <person name="Takahashi M."/>
            <person name="Kanda K."/>
            <person name="Yokoi T."/>
            <person name="Furuya T."/>
            <person name="Kikkawa E."/>
            <person name="Omura Y."/>
            <person name="Abe K."/>
            <person name="Kamihara K."/>
            <person name="Katsuta N."/>
            <person name="Sato K."/>
            <person name="Tanikawa M."/>
            <person name="Yamazaki M."/>
            <person name="Ninomiya K."/>
            <person name="Ishibashi T."/>
            <person name="Yamashita H."/>
            <person name="Murakawa K."/>
            <person name="Fujimori K."/>
            <person name="Tanai H."/>
            <person name="Kimata M."/>
            <person name="Watanabe M."/>
            <person name="Hiraoka S."/>
            <person name="Chiba Y."/>
            <person name="Ishida S."/>
            <person name="Ono Y."/>
            <person name="Takiguchi S."/>
            <person name="Watanabe S."/>
            <person name="Yosida M."/>
            <person name="Hotuta T."/>
            <person name="Kusano J."/>
            <person name="Kanehori K."/>
            <person name="Takahashi-Fujii A."/>
            <person name="Hara H."/>
            <person name="Tanase T.-O."/>
            <person name="Nomura Y."/>
            <person name="Togiya S."/>
            <person name="Komai F."/>
            <person name="Hara R."/>
            <person name="Takeuchi K."/>
            <person name="Arita M."/>
            <person name="Imose N."/>
            <person name="Musashino K."/>
            <person name="Yuuki H."/>
            <person name="Oshima A."/>
            <person name="Sasaki N."/>
            <person name="Aotsuka S."/>
            <person name="Yoshikawa Y."/>
            <person name="Matsunawa H."/>
            <person name="Ichihara T."/>
            <person name="Shiohata N."/>
            <person name="Sano S."/>
            <person name="Moriya S."/>
            <person name="Momiyama H."/>
            <person name="Satoh N."/>
            <person name="Takami S."/>
            <person name="Terashima Y."/>
            <person name="Suzuki O."/>
            <person name="Nakagawa S."/>
            <person name="Senoh A."/>
            <person name="Mizoguchi H."/>
            <person name="Goto Y."/>
            <person name="Shimizu F."/>
            <person name="Wakebe H."/>
            <person name="Hishigaki H."/>
            <person name="Watanabe T."/>
            <person name="Sugiyama A."/>
            <person name="Takemoto M."/>
            <person name="Kawakami B."/>
            <person name="Yamazaki M."/>
            <person name="Watanabe K."/>
            <person name="Kumagai A."/>
            <person name="Itakura S."/>
            <person name="Fukuzumi Y."/>
            <person name="Fujimori Y."/>
            <person name="Komiyama M."/>
            <person name="Tashiro H."/>
            <person name="Tanigami A."/>
            <person name="Fujiwara T."/>
            <person name="Ono T."/>
            <person name="Yamada K."/>
            <person name="Fujii Y."/>
            <person name="Ozaki K."/>
            <person name="Hirao M."/>
            <person name="Ohmori Y."/>
            <person name="Kawabata A."/>
            <person name="Hikiji T."/>
            <person name="Kobatake N."/>
            <person name="Inagaki H."/>
            <person name="Ikema Y."/>
            <person name="Okamoto S."/>
            <person name="Okitani R."/>
            <person name="Kawakami T."/>
            <person name="Noguchi S."/>
            <person name="Itoh T."/>
            <person name="Shigeta K."/>
            <person name="Senba T."/>
            <person name="Matsumura K."/>
            <person name="Nakajima Y."/>
            <person name="Mizuno T."/>
            <person name="Morinaga M."/>
            <person name="Sasaki M."/>
            <person name="Togashi T."/>
            <person name="Oyama M."/>
            <person name="Hata H."/>
            <person name="Watanabe M."/>
            <person name="Komatsu T."/>
            <person name="Mizushima-Sugano J."/>
            <person name="Satoh T."/>
            <person name="Shirai Y."/>
            <person name="Takahashi Y."/>
            <person name="Nakagawa K."/>
            <person name="Okumura K."/>
            <person name="Nagase T."/>
            <person name="Nomura N."/>
            <person name="Kikuchi H."/>
            <person name="Masuho Y."/>
            <person name="Yamashita R."/>
            <person name="Nakai K."/>
            <person name="Yada T."/>
            <person name="Nakamura Y."/>
            <person name="Ohara O."/>
            <person name="Isogai T."/>
            <person name="Sugano S."/>
        </authorList>
    </citation>
    <scope>NUCLEOTIDE SEQUENCE [LARGE SCALE MRNA]</scope>
    <source>
        <tissue>Ovary</tissue>
    </source>
</reference>
<reference key="2">
    <citation type="journal article" date="2006" name="Nature">
        <title>Analysis of the DNA sequence and duplication history of human chromosome 15.</title>
        <authorList>
            <person name="Zody M.C."/>
            <person name="Garber M."/>
            <person name="Sharpe T."/>
            <person name="Young S.K."/>
            <person name="Rowen L."/>
            <person name="O'Neill K."/>
            <person name="Whittaker C.A."/>
            <person name="Kamal M."/>
            <person name="Chang J.L."/>
            <person name="Cuomo C.A."/>
            <person name="Dewar K."/>
            <person name="FitzGerald M.G."/>
            <person name="Kodira C.D."/>
            <person name="Madan A."/>
            <person name="Qin S."/>
            <person name="Yang X."/>
            <person name="Abbasi N."/>
            <person name="Abouelleil A."/>
            <person name="Arachchi H.M."/>
            <person name="Baradarani L."/>
            <person name="Birditt B."/>
            <person name="Bloom S."/>
            <person name="Bloom T."/>
            <person name="Borowsky M.L."/>
            <person name="Burke J."/>
            <person name="Butler J."/>
            <person name="Cook A."/>
            <person name="DeArellano K."/>
            <person name="DeCaprio D."/>
            <person name="Dorris L. III"/>
            <person name="Dors M."/>
            <person name="Eichler E.E."/>
            <person name="Engels R."/>
            <person name="Fahey J."/>
            <person name="Fleetwood P."/>
            <person name="Friedman C."/>
            <person name="Gearin G."/>
            <person name="Hall J.L."/>
            <person name="Hensley G."/>
            <person name="Johnson E."/>
            <person name="Jones C."/>
            <person name="Kamat A."/>
            <person name="Kaur A."/>
            <person name="Locke D.P."/>
            <person name="Madan A."/>
            <person name="Munson G."/>
            <person name="Jaffe D.B."/>
            <person name="Lui A."/>
            <person name="Macdonald P."/>
            <person name="Mauceli E."/>
            <person name="Naylor J.W."/>
            <person name="Nesbitt R."/>
            <person name="Nicol R."/>
            <person name="O'Leary S.B."/>
            <person name="Ratcliffe A."/>
            <person name="Rounsley S."/>
            <person name="She X."/>
            <person name="Sneddon K.M.B."/>
            <person name="Stewart S."/>
            <person name="Sougnez C."/>
            <person name="Stone S.M."/>
            <person name="Topham K."/>
            <person name="Vincent D."/>
            <person name="Wang S."/>
            <person name="Zimmer A.R."/>
            <person name="Birren B.W."/>
            <person name="Hood L."/>
            <person name="Lander E.S."/>
            <person name="Nusbaum C."/>
        </authorList>
    </citation>
    <scope>NUCLEOTIDE SEQUENCE [LARGE SCALE GENOMIC DNA]</scope>
</reference>
<reference key="3">
    <citation type="journal article" date="2004" name="Genome Res.">
        <title>The status, quality, and expansion of the NIH full-length cDNA project: the Mammalian Gene Collection (MGC).</title>
        <authorList>
            <consortium name="The MGC Project Team"/>
        </authorList>
    </citation>
    <scope>NUCLEOTIDE SEQUENCE [LARGE SCALE MRNA]</scope>
    <source>
        <tissue>Testis</tissue>
    </source>
</reference>
<dbReference type="EMBL" id="AK023377">
    <property type="protein sequence ID" value="BAB14550.1"/>
    <property type="molecule type" value="mRNA"/>
</dbReference>
<dbReference type="EMBL" id="AC009690">
    <property type="status" value="NOT_ANNOTATED_CDS"/>
    <property type="molecule type" value="Genomic_DNA"/>
</dbReference>
<dbReference type="EMBL" id="BC068211">
    <property type="status" value="NOT_ANNOTATED_CDS"/>
    <property type="molecule type" value="mRNA"/>
</dbReference>
<dbReference type="SMR" id="Q9H8Q6"/>
<dbReference type="BioMuta" id="HGNC:25810"/>
<dbReference type="DMDM" id="74733872"/>
<dbReference type="AGR" id="HGNC:25810"/>
<dbReference type="GeneCards" id="HEXA-AS1"/>
<dbReference type="HGNC" id="HGNC:25810">
    <property type="gene designation" value="HEXA-AS1"/>
</dbReference>
<dbReference type="MalaCards" id="HEXA-AS1"/>
<dbReference type="neXtProt" id="NX_Q9H8Q6"/>
<dbReference type="InParanoid" id="Q9H8Q6"/>
<dbReference type="PAN-GO" id="Q9H8Q6">
    <property type="GO annotations" value="0 GO annotations based on evolutionary models"/>
</dbReference>
<dbReference type="Pharos" id="Q9H8Q6">
    <property type="development level" value="Tdark"/>
</dbReference>
<dbReference type="Proteomes" id="UP000005640">
    <property type="component" value="Unplaced"/>
</dbReference>
<dbReference type="RNAct" id="Q9H8Q6">
    <property type="molecule type" value="protein"/>
</dbReference>
<keyword id="KW-1185">Reference proteome</keyword>